<keyword id="KW-0249">Electron transport</keyword>
<keyword id="KW-0472">Membrane</keyword>
<keyword id="KW-0496">Mitochondrion</keyword>
<keyword id="KW-0520">NAD</keyword>
<keyword id="KW-0679">Respiratory chain</keyword>
<keyword id="KW-1278">Translocase</keyword>
<keyword id="KW-0812">Transmembrane</keyword>
<keyword id="KW-1133">Transmembrane helix</keyword>
<keyword id="KW-0813">Transport</keyword>
<keyword id="KW-0830">Ubiquinone</keyword>
<gene>
    <name type="primary">ND4L</name>
    <name type="synonym">NAD4L</name>
</gene>
<accession>P26851</accession>
<dbReference type="EC" id="7.1.1.2"/>
<dbReference type="EMBL" id="M68929">
    <property type="protein sequence ID" value="AAC09429.1"/>
    <property type="molecule type" value="Genomic_DNA"/>
</dbReference>
<dbReference type="PIR" id="S25948">
    <property type="entry name" value="S25948"/>
</dbReference>
<dbReference type="RefSeq" id="NP_054432.1">
    <property type="nucleotide sequence ID" value="NC_001660.1"/>
</dbReference>
<dbReference type="SMR" id="P26851"/>
<dbReference type="GeneID" id="2702478"/>
<dbReference type="GO" id="GO:0031966">
    <property type="term" value="C:mitochondrial membrane"/>
    <property type="evidence" value="ECO:0007669"/>
    <property type="project" value="UniProtKB-SubCell"/>
</dbReference>
<dbReference type="GO" id="GO:0008137">
    <property type="term" value="F:NADH dehydrogenase (ubiquinone) activity"/>
    <property type="evidence" value="ECO:0007669"/>
    <property type="project" value="UniProtKB-EC"/>
</dbReference>
<dbReference type="GO" id="GO:0042773">
    <property type="term" value="P:ATP synthesis coupled electron transport"/>
    <property type="evidence" value="ECO:0007669"/>
    <property type="project" value="InterPro"/>
</dbReference>
<dbReference type="FunFam" id="1.10.287.3510:FF:000001">
    <property type="entry name" value="NADH-quinone oxidoreductase subunit K"/>
    <property type="match status" value="1"/>
</dbReference>
<dbReference type="Gene3D" id="1.10.287.3510">
    <property type="match status" value="1"/>
</dbReference>
<dbReference type="HAMAP" id="MF_01456">
    <property type="entry name" value="NDH1_NuoK"/>
    <property type="match status" value="1"/>
</dbReference>
<dbReference type="InterPro" id="IPR001133">
    <property type="entry name" value="NADH_UbQ_OxRdtase_chain4L/K"/>
</dbReference>
<dbReference type="InterPro" id="IPR039428">
    <property type="entry name" value="NUOK/Mnh_C1-like"/>
</dbReference>
<dbReference type="NCBIfam" id="NF004320">
    <property type="entry name" value="PRK05715.1-2"/>
    <property type="match status" value="1"/>
</dbReference>
<dbReference type="NCBIfam" id="NF004321">
    <property type="entry name" value="PRK05715.1-3"/>
    <property type="match status" value="1"/>
</dbReference>
<dbReference type="NCBIfam" id="NF004323">
    <property type="entry name" value="PRK05715.1-5"/>
    <property type="match status" value="1"/>
</dbReference>
<dbReference type="PANTHER" id="PTHR11434:SF21">
    <property type="entry name" value="NADH DEHYDROGENASE SUBUNIT 4L-RELATED"/>
    <property type="match status" value="1"/>
</dbReference>
<dbReference type="PANTHER" id="PTHR11434">
    <property type="entry name" value="NADH-UBIQUINONE OXIDOREDUCTASE SUBUNIT ND4L"/>
    <property type="match status" value="1"/>
</dbReference>
<dbReference type="Pfam" id="PF00420">
    <property type="entry name" value="Oxidored_q2"/>
    <property type="match status" value="1"/>
</dbReference>
<sequence>MDLVKYLTFSMILFLLGIWGIFLNRKNILIMLMSIELMLLAVNLNFLVFSVYLDDMMGQLFALFVLTVAAAESAIGLAILVITFRIRGTIAVEFINCMKG</sequence>
<proteinExistence type="inferred from homology"/>
<protein>
    <recommendedName>
        <fullName>NADH-ubiquinone oxidoreductase chain 4L</fullName>
        <ecNumber>7.1.1.2</ecNumber>
    </recommendedName>
    <alternativeName>
        <fullName>NADH dehydrogenase subunit 4L</fullName>
    </alternativeName>
</protein>
<reference key="1">
    <citation type="journal article" date="1992" name="J. Mol. Biol.">
        <title>Gene organization deduced from the complete sequence of liverwort Marchantia polymorpha mitochondrial DNA. A primitive form of plant mitochondrial genome.</title>
        <authorList>
            <person name="Oda K."/>
            <person name="Yamato K."/>
            <person name="Ohta E."/>
            <person name="Nakamura Y."/>
            <person name="Takemura M."/>
            <person name="Nozato N."/>
            <person name="Akashi K."/>
            <person name="Kanegae T."/>
            <person name="Ogura Y."/>
            <person name="Kohchi T."/>
            <person name="Ohyama K."/>
        </authorList>
    </citation>
    <scope>NUCLEOTIDE SEQUENCE [GENOMIC DNA]</scope>
</reference>
<name>NU4LM_MARPO</name>
<feature type="chain" id="PRO_0000118445" description="NADH-ubiquinone oxidoreductase chain 4L">
    <location>
        <begin position="1"/>
        <end position="100"/>
    </location>
</feature>
<feature type="transmembrane region" description="Helical" evidence="2">
    <location>
        <begin position="3"/>
        <end position="23"/>
    </location>
</feature>
<feature type="transmembrane region" description="Helical" evidence="2">
    <location>
        <begin position="28"/>
        <end position="48"/>
    </location>
</feature>
<feature type="transmembrane region" description="Helical" evidence="2">
    <location>
        <begin position="62"/>
        <end position="82"/>
    </location>
</feature>
<evidence type="ECO:0000250" key="1"/>
<evidence type="ECO:0000255" key="2"/>
<evidence type="ECO:0000305" key="3"/>
<geneLocation type="mitochondrion"/>
<comment type="function">
    <text evidence="1">Core subunit of the mitochondrial membrane respiratory chain NADH dehydrogenase (Complex I) that is believed to belong to the minimal assembly required for catalysis. Complex I functions in the transfer of electrons from NADH to the respiratory chain. The immediate electron acceptor for the enzyme is believed to be ubiquinone (By similarity).</text>
</comment>
<comment type="catalytic activity">
    <reaction>
        <text>a ubiquinone + NADH + 5 H(+)(in) = a ubiquinol + NAD(+) + 4 H(+)(out)</text>
        <dbReference type="Rhea" id="RHEA:29091"/>
        <dbReference type="Rhea" id="RHEA-COMP:9565"/>
        <dbReference type="Rhea" id="RHEA-COMP:9566"/>
        <dbReference type="ChEBI" id="CHEBI:15378"/>
        <dbReference type="ChEBI" id="CHEBI:16389"/>
        <dbReference type="ChEBI" id="CHEBI:17976"/>
        <dbReference type="ChEBI" id="CHEBI:57540"/>
        <dbReference type="ChEBI" id="CHEBI:57945"/>
        <dbReference type="EC" id="7.1.1.2"/>
    </reaction>
</comment>
<comment type="subunit">
    <text evidence="1">Complex I is composed of about 45 different subunits.</text>
</comment>
<comment type="subcellular location">
    <subcellularLocation>
        <location evidence="1">Mitochondrion membrane</location>
        <topology evidence="1">Multi-pass membrane protein</topology>
    </subcellularLocation>
</comment>
<comment type="similarity">
    <text evidence="3">Belongs to the complex I subunit 4L family.</text>
</comment>
<organism>
    <name type="scientific">Marchantia polymorpha</name>
    <name type="common">Common liverwort</name>
    <name type="synonym">Marchantia aquatica</name>
    <dbReference type="NCBI Taxonomy" id="3197"/>
    <lineage>
        <taxon>Eukaryota</taxon>
        <taxon>Viridiplantae</taxon>
        <taxon>Streptophyta</taxon>
        <taxon>Embryophyta</taxon>
        <taxon>Marchantiophyta</taxon>
        <taxon>Marchantiopsida</taxon>
        <taxon>Marchantiidae</taxon>
        <taxon>Marchantiales</taxon>
        <taxon>Marchantiaceae</taxon>
        <taxon>Marchantia</taxon>
    </lineage>
</organism>